<proteinExistence type="evidence at protein level"/>
<organism>
    <name type="scientific">Flavobacterium frigidimaris</name>
    <dbReference type="NCBI Taxonomy" id="262320"/>
    <lineage>
        <taxon>Bacteria</taxon>
        <taxon>Pseudomonadati</taxon>
        <taxon>Bacteroidota</taxon>
        <taxon>Flavobacteriia</taxon>
        <taxon>Flavobacteriales</taxon>
        <taxon>Flavobacteriaceae</taxon>
        <taxon>Flavobacterium</taxon>
    </lineage>
</organism>
<name>MDH_FLAFR</name>
<comment type="function">
    <text evidence="2">Catalyzes the reversible oxidation of malate to oxaloacetate. Can use both NAD and NADP for malate oxidation, but NADPH cannot be used for oxaloacetate reduction.</text>
</comment>
<comment type="catalytic activity">
    <reaction evidence="1 2">
        <text>(S)-malate + NAD(+) = oxaloacetate + NADH + H(+)</text>
        <dbReference type="Rhea" id="RHEA:21432"/>
        <dbReference type="ChEBI" id="CHEBI:15378"/>
        <dbReference type="ChEBI" id="CHEBI:15589"/>
        <dbReference type="ChEBI" id="CHEBI:16452"/>
        <dbReference type="ChEBI" id="CHEBI:57540"/>
        <dbReference type="ChEBI" id="CHEBI:57945"/>
        <dbReference type="EC" id="1.1.1.37"/>
    </reaction>
</comment>
<comment type="activity regulation">
    <text evidence="2">Strongly inhibited by iodoacetic acid and CuCl(2). Completely inhibited by N-ethylmaleimide and HgCl(2).</text>
</comment>
<comment type="biophysicochemical properties">
    <kinetics>
        <KM evidence="2">0.74 mM for L-malate (at 40 degrees Celsius)</KM>
        <KM evidence="2">0.0382 mM for NAD(+) (at 40 degrees Celsius)</KM>
        <Vmax evidence="2">456.0 umol/min/mg enzyme (at 40 degrees Celsius)</Vmax>
        <text evidence="2">kcat is 138 sec(-1).</text>
    </kinetics>
    <phDependence>
        <text evidence="2">Optimum pH is 10.5 for malate oxidation and 8.0 for oxaloacetate reduction.</text>
    </phDependence>
    <temperatureDependence>
        <text evidence="2">Optimum temperature is 40 degrees Celsius.</text>
    </temperatureDependence>
</comment>
<comment type="subunit">
    <text evidence="2 3">Homotetramer.</text>
</comment>
<comment type="similarity">
    <text evidence="1 5">Belongs to the LDH/MDH superfamily. MDH type 3 family.</text>
</comment>
<dbReference type="EC" id="1.1.1.37" evidence="1 2"/>
<dbReference type="EMBL" id="AB161423">
    <property type="protein sequence ID" value="BAE91927.2"/>
    <property type="molecule type" value="Genomic_DNA"/>
</dbReference>
<dbReference type="SMR" id="Q25QU7"/>
<dbReference type="STRING" id="262320.SAMN05444481_103297"/>
<dbReference type="BRENDA" id="1.1.1.37">
    <property type="organism ID" value="8533"/>
</dbReference>
<dbReference type="GO" id="GO:0004459">
    <property type="term" value="F:L-lactate dehydrogenase activity"/>
    <property type="evidence" value="ECO:0007669"/>
    <property type="project" value="TreeGrafter"/>
</dbReference>
<dbReference type="GO" id="GO:0030060">
    <property type="term" value="F:L-malate dehydrogenase (NAD+) activity"/>
    <property type="evidence" value="ECO:0007669"/>
    <property type="project" value="UniProtKB-UniRule"/>
</dbReference>
<dbReference type="GO" id="GO:0006089">
    <property type="term" value="P:lactate metabolic process"/>
    <property type="evidence" value="ECO:0007669"/>
    <property type="project" value="TreeGrafter"/>
</dbReference>
<dbReference type="GO" id="GO:0006099">
    <property type="term" value="P:tricarboxylic acid cycle"/>
    <property type="evidence" value="ECO:0007669"/>
    <property type="project" value="UniProtKB-UniRule"/>
</dbReference>
<dbReference type="CDD" id="cd01339">
    <property type="entry name" value="LDH-like_MDH"/>
    <property type="match status" value="1"/>
</dbReference>
<dbReference type="FunFam" id="3.40.50.720:FF:000018">
    <property type="entry name" value="Malate dehydrogenase"/>
    <property type="match status" value="1"/>
</dbReference>
<dbReference type="Gene3D" id="3.90.110.10">
    <property type="entry name" value="Lactate dehydrogenase/glycoside hydrolase, family 4, C-terminal"/>
    <property type="match status" value="1"/>
</dbReference>
<dbReference type="Gene3D" id="3.40.50.720">
    <property type="entry name" value="NAD(P)-binding Rossmann-like Domain"/>
    <property type="match status" value="1"/>
</dbReference>
<dbReference type="HAMAP" id="MF_00487">
    <property type="entry name" value="Malate_dehydrog_3"/>
    <property type="match status" value="1"/>
</dbReference>
<dbReference type="InterPro" id="IPR001557">
    <property type="entry name" value="L-lactate/malate_DH"/>
</dbReference>
<dbReference type="InterPro" id="IPR022383">
    <property type="entry name" value="Lactate/malate_DH_C"/>
</dbReference>
<dbReference type="InterPro" id="IPR001236">
    <property type="entry name" value="Lactate/malate_DH_N"/>
</dbReference>
<dbReference type="InterPro" id="IPR015955">
    <property type="entry name" value="Lactate_DH/Glyco_Ohase_4_C"/>
</dbReference>
<dbReference type="InterPro" id="IPR011275">
    <property type="entry name" value="Malate_DH_type3"/>
</dbReference>
<dbReference type="InterPro" id="IPR036291">
    <property type="entry name" value="NAD(P)-bd_dom_sf"/>
</dbReference>
<dbReference type="NCBIfam" id="TIGR01763">
    <property type="entry name" value="MalateDH_bact"/>
    <property type="match status" value="1"/>
</dbReference>
<dbReference type="NCBIfam" id="NF004863">
    <property type="entry name" value="PRK06223.1"/>
    <property type="match status" value="1"/>
</dbReference>
<dbReference type="PANTHER" id="PTHR43128">
    <property type="entry name" value="L-2-HYDROXYCARBOXYLATE DEHYDROGENASE (NAD(P)(+))"/>
    <property type="match status" value="1"/>
</dbReference>
<dbReference type="PANTHER" id="PTHR43128:SF16">
    <property type="entry name" value="L-LACTATE DEHYDROGENASE"/>
    <property type="match status" value="1"/>
</dbReference>
<dbReference type="Pfam" id="PF02866">
    <property type="entry name" value="Ldh_1_C"/>
    <property type="match status" value="1"/>
</dbReference>
<dbReference type="Pfam" id="PF00056">
    <property type="entry name" value="Ldh_1_N"/>
    <property type="match status" value="1"/>
</dbReference>
<dbReference type="PIRSF" id="PIRSF000102">
    <property type="entry name" value="Lac_mal_DH"/>
    <property type="match status" value="1"/>
</dbReference>
<dbReference type="PRINTS" id="PR00086">
    <property type="entry name" value="LLDHDRGNASE"/>
</dbReference>
<dbReference type="SUPFAM" id="SSF56327">
    <property type="entry name" value="LDH C-terminal domain-like"/>
    <property type="match status" value="1"/>
</dbReference>
<dbReference type="SUPFAM" id="SSF51735">
    <property type="entry name" value="NAD(P)-binding Rossmann-fold domains"/>
    <property type="match status" value="1"/>
</dbReference>
<gene>
    <name evidence="1 4" type="primary">mdh</name>
</gene>
<sequence length="311" mass="32610">MKVTIVGAGNVGATCADVISYRGIASEVVLLDIKEGFAEGKALDIMQCATNTGFNTKVSGVTNDYSKTAGSDVVVITSGIPRKPGMTREELIGINAGIVKTVAENVLKHSPNTIIVVVSNPMDTMTYLALKATGVPKNRIIGMGGALDSSRFRTYLSLALDKPANDISAMVIGGHGDTTMIPLTRLASYNGIPVTEFLSEEVLQKVAADTMVGGATLTGLLGTSAWYAPGASVAYLVDSILNDQKKMIACSVFVEGEYGQNDICIGVPCIIGKNGVEEILDIKLNDQEKALFAKSADAVRGMNDALKSILV</sequence>
<evidence type="ECO:0000255" key="1">
    <source>
        <dbReference type="HAMAP-Rule" id="MF_00487"/>
    </source>
</evidence>
<evidence type="ECO:0000269" key="2">
    <source>
    </source>
</evidence>
<evidence type="ECO:0000269" key="3">
    <source>
    </source>
</evidence>
<evidence type="ECO:0000303" key="4">
    <source>
    </source>
</evidence>
<evidence type="ECO:0000305" key="5"/>
<reference key="1">
    <citation type="journal article" date="2005" name="Biosci. Biotechnol. Biochem.">
        <title>Purification, characterization, and overexpression of psychrophilic and thermolabile malate dehydrogenase of a novel antarctic psychrotolerant, Flavobacterium frigidimaris KUC-1.</title>
        <authorList>
            <person name="Oikawa T."/>
            <person name="Yamamoto N."/>
            <person name="Shimoke K."/>
            <person name="Uesato S."/>
            <person name="Ikeuchi T."/>
            <person name="Fujioka T."/>
        </authorList>
    </citation>
    <scope>NUCLEOTIDE SEQUENCE [GENOMIC DNA]</scope>
    <scope>PROTEIN SEQUENCE OF 1-17; 57-67 AND 137-151</scope>
    <scope>FUNCTION</scope>
    <scope>CATALYTIC ACTIVITY</scope>
    <scope>ACTIVITY REGULATION</scope>
    <scope>BIOPHYSICOCHEMICAL PROPERTIES</scope>
    <scope>SUBUNIT</scope>
    <source>
        <strain>DSM 15937 / CIP 109029 / JCM 12218 / KUC-1</strain>
    </source>
</reference>
<reference key="2">
    <citation type="journal article" date="2007" name="Acta Crystallogr. F">
        <title>Crystallization and preliminary X-ray diffraction studies of tetrameric malate dehydrogenase from the novel Antarctic psychrophile Flavobacterium frigidimaris KUC-1.</title>
        <authorList>
            <person name="Fujii T."/>
            <person name="Oikawa T."/>
            <person name="Muraoka I."/>
            <person name="Soda K."/>
            <person name="Hata Y."/>
        </authorList>
    </citation>
    <scope>CRYSTALLIZATION</scope>
    <scope>SUBUNIT</scope>
    <source>
        <strain>DSM 15937 / CIP 109029 / JCM 12218 / KUC-1</strain>
    </source>
</reference>
<protein>
    <recommendedName>
        <fullName evidence="1 4">Malate dehydrogenase</fullName>
        <ecNumber evidence="1 2">1.1.1.37</ecNumber>
    </recommendedName>
</protein>
<feature type="chain" id="PRO_0000436025" description="Malate dehydrogenase">
    <location>
        <begin position="1"/>
        <end position="311"/>
    </location>
</feature>
<feature type="active site" description="Proton acceptor" evidence="1">
    <location>
        <position position="175"/>
    </location>
</feature>
<feature type="binding site" evidence="1">
    <location>
        <begin position="7"/>
        <end position="12"/>
    </location>
    <ligand>
        <name>NAD(+)</name>
        <dbReference type="ChEBI" id="CHEBI:57540"/>
    </ligand>
</feature>
<feature type="binding site" evidence="1">
    <location>
        <position position="32"/>
    </location>
    <ligand>
        <name>NAD(+)</name>
        <dbReference type="ChEBI" id="CHEBI:57540"/>
    </ligand>
</feature>
<feature type="binding site" evidence="1">
    <location>
        <position position="82"/>
    </location>
    <ligand>
        <name>substrate</name>
    </ligand>
</feature>
<feature type="binding site" evidence="1">
    <location>
        <position position="88"/>
    </location>
    <ligand>
        <name>substrate</name>
    </ligand>
</feature>
<feature type="binding site" evidence="1">
    <location>
        <position position="95"/>
    </location>
    <ligand>
        <name>NAD(+)</name>
        <dbReference type="ChEBI" id="CHEBI:57540"/>
    </ligand>
</feature>
<feature type="binding site" evidence="1">
    <location>
        <begin position="118"/>
        <end position="120"/>
    </location>
    <ligand>
        <name>NAD(+)</name>
        <dbReference type="ChEBI" id="CHEBI:57540"/>
    </ligand>
</feature>
<feature type="binding site" evidence="1">
    <location>
        <position position="120"/>
    </location>
    <ligand>
        <name>substrate</name>
    </ligand>
</feature>
<feature type="binding site" evidence="1">
    <location>
        <position position="151"/>
    </location>
    <ligand>
        <name>substrate</name>
    </ligand>
</feature>
<feature type="sequence conflict" description="In Ref. 1; AA sequence." evidence="5" ref="1">
    <original>C</original>
    <variation>T</variation>
    <location>
        <position position="15"/>
    </location>
</feature>
<feature type="sequence conflict" description="In Ref. 1; AA sequence." evidence="5" ref="1">
    <original>D</original>
    <variation>F</variation>
    <location>
        <position position="17"/>
    </location>
</feature>
<feature type="sequence conflict" description="In Ref. 1; AA sequence." evidence="5" ref="1">
    <location>
        <position position="61"/>
    </location>
</feature>
<feature type="sequence conflict" description="In Ref. 1; AA sequence." evidence="5" ref="1">
    <original>D</original>
    <variation>N</variation>
    <location>
        <position position="64"/>
    </location>
</feature>
<feature type="sequence conflict" description="In Ref. 1; AA sequence." evidence="5" ref="1">
    <original>M</original>
    <variation>V</variation>
    <location>
        <position position="143"/>
    </location>
</feature>
<accession>Q25QU7</accession>
<keyword id="KW-0903">Direct protein sequencing</keyword>
<keyword id="KW-0520">NAD</keyword>
<keyword id="KW-0560">Oxidoreductase</keyword>
<keyword id="KW-0816">Tricarboxylic acid cycle</keyword>